<organism>
    <name type="scientific">Arabidopsis thaliana</name>
    <name type="common">Mouse-ear cress</name>
    <dbReference type="NCBI Taxonomy" id="3702"/>
    <lineage>
        <taxon>Eukaryota</taxon>
        <taxon>Viridiplantae</taxon>
        <taxon>Streptophyta</taxon>
        <taxon>Embryophyta</taxon>
        <taxon>Tracheophyta</taxon>
        <taxon>Spermatophyta</taxon>
        <taxon>Magnoliopsida</taxon>
        <taxon>eudicotyledons</taxon>
        <taxon>Gunneridae</taxon>
        <taxon>Pentapetalae</taxon>
        <taxon>rosids</taxon>
        <taxon>malvids</taxon>
        <taxon>Brassicales</taxon>
        <taxon>Brassicaceae</taxon>
        <taxon>Camelineae</taxon>
        <taxon>Arabidopsis</taxon>
    </lineage>
</organism>
<dbReference type="EMBL" id="AC006593">
    <property type="protein sequence ID" value="AAD20668.1"/>
    <property type="status" value="ALT_SEQ"/>
    <property type="molecule type" value="Genomic_DNA"/>
</dbReference>
<dbReference type="EMBL" id="CP002685">
    <property type="protein sequence ID" value="AEC08512.1"/>
    <property type="molecule type" value="Genomic_DNA"/>
</dbReference>
<dbReference type="EMBL" id="AY070443">
    <property type="protein sequence ID" value="AAL49846.1"/>
    <property type="molecule type" value="mRNA"/>
</dbReference>
<dbReference type="EMBL" id="AY096563">
    <property type="protein sequence ID" value="AAM20213.1"/>
    <property type="molecule type" value="mRNA"/>
</dbReference>
<dbReference type="PIR" id="B84718">
    <property type="entry name" value="B84718"/>
</dbReference>
<dbReference type="RefSeq" id="NP_850162.1">
    <property type="nucleotide sequence ID" value="NM_179831.2"/>
</dbReference>
<dbReference type="SMR" id="Q8VYM0"/>
<dbReference type="BioGRID" id="3028">
    <property type="interactions" value="1"/>
</dbReference>
<dbReference type="FunCoup" id="Q8VYM0">
    <property type="interactions" value="2"/>
</dbReference>
<dbReference type="STRING" id="3702.Q8VYM0"/>
<dbReference type="PaxDb" id="3702-AT2G31230.1"/>
<dbReference type="EnsemblPlants" id="AT2G31230.1">
    <property type="protein sequence ID" value="AT2G31230.1"/>
    <property type="gene ID" value="AT2G31230"/>
</dbReference>
<dbReference type="GeneID" id="817680"/>
<dbReference type="Gramene" id="AT2G31230.1">
    <property type="protein sequence ID" value="AT2G31230.1"/>
    <property type="gene ID" value="AT2G31230"/>
</dbReference>
<dbReference type="KEGG" id="ath:AT2G31230"/>
<dbReference type="Araport" id="AT2G31230"/>
<dbReference type="TAIR" id="AT2G31230">
    <property type="gene designation" value="ERF15"/>
</dbReference>
<dbReference type="eggNOG" id="ENOG502RBAX">
    <property type="taxonomic scope" value="Eukaryota"/>
</dbReference>
<dbReference type="HOGENOM" id="CLU_058713_1_1_1"/>
<dbReference type="InParanoid" id="Q8VYM0"/>
<dbReference type="OMA" id="LWNESCF"/>
<dbReference type="PhylomeDB" id="Q8VYM0"/>
<dbReference type="PRO" id="PR:Q8VYM0"/>
<dbReference type="Proteomes" id="UP000006548">
    <property type="component" value="Chromosome 2"/>
</dbReference>
<dbReference type="ExpressionAtlas" id="Q8VYM0">
    <property type="expression patterns" value="baseline and differential"/>
</dbReference>
<dbReference type="GO" id="GO:0005634">
    <property type="term" value="C:nucleus"/>
    <property type="evidence" value="ECO:0007669"/>
    <property type="project" value="UniProtKB-SubCell"/>
</dbReference>
<dbReference type="GO" id="GO:0003700">
    <property type="term" value="F:DNA-binding transcription factor activity"/>
    <property type="evidence" value="ECO:0000250"/>
    <property type="project" value="TAIR"/>
</dbReference>
<dbReference type="GO" id="GO:0000976">
    <property type="term" value="F:transcription cis-regulatory region binding"/>
    <property type="evidence" value="ECO:0000353"/>
    <property type="project" value="TAIR"/>
</dbReference>
<dbReference type="GO" id="GO:0006952">
    <property type="term" value="P:defense response"/>
    <property type="evidence" value="ECO:0007669"/>
    <property type="project" value="UniProtKB-KW"/>
</dbReference>
<dbReference type="GO" id="GO:0009873">
    <property type="term" value="P:ethylene-activated signaling pathway"/>
    <property type="evidence" value="ECO:0000304"/>
    <property type="project" value="TAIR"/>
</dbReference>
<dbReference type="CDD" id="cd00018">
    <property type="entry name" value="AP2"/>
    <property type="match status" value="1"/>
</dbReference>
<dbReference type="FunFam" id="3.30.730.10:FF:000001">
    <property type="entry name" value="Ethylene-responsive transcription factor 2"/>
    <property type="match status" value="1"/>
</dbReference>
<dbReference type="Gene3D" id="3.30.730.10">
    <property type="entry name" value="AP2/ERF domain"/>
    <property type="match status" value="1"/>
</dbReference>
<dbReference type="InterPro" id="IPR001471">
    <property type="entry name" value="AP2/ERF_dom"/>
</dbReference>
<dbReference type="InterPro" id="IPR036955">
    <property type="entry name" value="AP2/ERF_dom_sf"/>
</dbReference>
<dbReference type="InterPro" id="IPR016177">
    <property type="entry name" value="DNA-bd_dom_sf"/>
</dbReference>
<dbReference type="InterPro" id="IPR044808">
    <property type="entry name" value="ERF_plant"/>
</dbReference>
<dbReference type="PANTHER" id="PTHR31190">
    <property type="entry name" value="DNA-BINDING DOMAIN"/>
    <property type="match status" value="1"/>
</dbReference>
<dbReference type="PANTHER" id="PTHR31190:SF477">
    <property type="entry name" value="ETHYLENE-RESPONSIVE TRANSCRIPTION FACTOR 15"/>
    <property type="match status" value="1"/>
</dbReference>
<dbReference type="Pfam" id="PF00847">
    <property type="entry name" value="AP2"/>
    <property type="match status" value="1"/>
</dbReference>
<dbReference type="PRINTS" id="PR00367">
    <property type="entry name" value="ETHRSPELEMNT"/>
</dbReference>
<dbReference type="SMART" id="SM00380">
    <property type="entry name" value="AP2"/>
    <property type="match status" value="1"/>
</dbReference>
<dbReference type="SUPFAM" id="SSF54171">
    <property type="entry name" value="DNA-binding domain"/>
    <property type="match status" value="1"/>
</dbReference>
<dbReference type="PROSITE" id="PS51032">
    <property type="entry name" value="AP2_ERF"/>
    <property type="match status" value="1"/>
</dbReference>
<feature type="chain" id="PRO_0000112551" description="Ethylene-responsive transcription factor 15">
    <location>
        <begin position="1"/>
        <end position="243"/>
    </location>
</feature>
<feature type="DNA-binding region" description="AP2/ERF" evidence="3">
    <location>
        <begin position="85"/>
        <end position="143"/>
    </location>
</feature>
<feature type="region of interest" description="Disordered" evidence="4">
    <location>
        <begin position="157"/>
        <end position="220"/>
    </location>
</feature>
<feature type="short sequence motif" description="Nuclear localization signal" evidence="2">
    <location>
        <begin position="170"/>
        <end position="186"/>
    </location>
</feature>
<feature type="compositionally biased region" description="Basic residues" evidence="4">
    <location>
        <begin position="169"/>
        <end position="185"/>
    </location>
</feature>
<feature type="compositionally biased region" description="Low complexity" evidence="4">
    <location>
        <begin position="186"/>
        <end position="212"/>
    </location>
</feature>
<comment type="function">
    <text evidence="1 5">May act as a transcriptional activator. Binds to the GCC-box pathogenesis-related promoter element. Involved in the regulation of gene expression by stress factors and by components of stress signal transduction pathways (By similarity).</text>
</comment>
<comment type="subcellular location">
    <subcellularLocation>
        <location evidence="6">Nucleus</location>
    </subcellularLocation>
</comment>
<comment type="induction">
    <text evidence="5">Weakly induced by Pseudomonas syringae tomato (avirulent avrRpt2 strain), but also by mock inoculation.</text>
</comment>
<comment type="similarity">
    <text evidence="6">Belongs to the AP2/ERF transcription factor family. ERF subfamily.</text>
</comment>
<comment type="sequence caution" evidence="6">
    <conflict type="erroneous gene model prediction">
        <sequence resource="EMBL-CDS" id="AAD20668"/>
    </conflict>
</comment>
<gene>
    <name type="primary">ERF15</name>
    <name type="synonym">ERF-15</name>
    <name type="synonym">ERF093</name>
    <name type="ordered locus">At2g31230</name>
    <name type="ORF">F16D14.7</name>
</gene>
<evidence type="ECO:0000250" key="1"/>
<evidence type="ECO:0000255" key="2"/>
<evidence type="ECO:0000255" key="3">
    <source>
        <dbReference type="PROSITE-ProRule" id="PRU00366"/>
    </source>
</evidence>
<evidence type="ECO:0000256" key="4">
    <source>
        <dbReference type="SAM" id="MobiDB-lite"/>
    </source>
</evidence>
<evidence type="ECO:0000269" key="5">
    <source>
    </source>
</evidence>
<evidence type="ECO:0000305" key="6"/>
<name>ERF93_ARATH</name>
<proteinExistence type="evidence at transcript level"/>
<sequence>MEYSQSSMYSSPSSWSSSQESLLWNESCFLDQSSEPQAFFCPNYDYSDDFFSFESPEMMIKEEIQNGDVSNSEEEEKVGIDEERSYRGVRKRPWGKFAAEIRDSTRNGIRVWLGTFDKAEEAALAYDQAAFATKGSLATLNFPVEVVRESLKKMENVNLHDGGSPVMALKRKHSLRNRPRGKKRSSSSSSSSSNSSSCSSSSSTSSTSRSSSKQSVVKQESGTLVVFEDLGAEYLEQLLMSSC</sequence>
<protein>
    <recommendedName>
        <fullName>Ethylene-responsive transcription factor 15</fullName>
        <shortName>AtERF15</shortName>
    </recommendedName>
    <alternativeName>
        <fullName>Ethylene-responsive element-binding factor 15</fullName>
        <shortName>EREBP-15</shortName>
    </alternativeName>
</protein>
<reference key="1">
    <citation type="journal article" date="1999" name="Nature">
        <title>Sequence and analysis of chromosome 2 of the plant Arabidopsis thaliana.</title>
        <authorList>
            <person name="Lin X."/>
            <person name="Kaul S."/>
            <person name="Rounsley S.D."/>
            <person name="Shea T.P."/>
            <person name="Benito M.-I."/>
            <person name="Town C.D."/>
            <person name="Fujii C.Y."/>
            <person name="Mason T.M."/>
            <person name="Bowman C.L."/>
            <person name="Barnstead M.E."/>
            <person name="Feldblyum T.V."/>
            <person name="Buell C.R."/>
            <person name="Ketchum K.A."/>
            <person name="Lee J.J."/>
            <person name="Ronning C.M."/>
            <person name="Koo H.L."/>
            <person name="Moffat K.S."/>
            <person name="Cronin L.A."/>
            <person name="Shen M."/>
            <person name="Pai G."/>
            <person name="Van Aken S."/>
            <person name="Umayam L."/>
            <person name="Tallon L.J."/>
            <person name="Gill J.E."/>
            <person name="Adams M.D."/>
            <person name="Carrera A.J."/>
            <person name="Creasy T.H."/>
            <person name="Goodman H.M."/>
            <person name="Somerville C.R."/>
            <person name="Copenhaver G.P."/>
            <person name="Preuss D."/>
            <person name="Nierman W.C."/>
            <person name="White O."/>
            <person name="Eisen J.A."/>
            <person name="Salzberg S.L."/>
            <person name="Fraser C.M."/>
            <person name="Venter J.C."/>
        </authorList>
    </citation>
    <scope>NUCLEOTIDE SEQUENCE [LARGE SCALE GENOMIC DNA]</scope>
    <source>
        <strain>cv. Columbia</strain>
    </source>
</reference>
<reference key="2">
    <citation type="journal article" date="2017" name="Plant J.">
        <title>Araport11: a complete reannotation of the Arabidopsis thaliana reference genome.</title>
        <authorList>
            <person name="Cheng C.Y."/>
            <person name="Krishnakumar V."/>
            <person name="Chan A.P."/>
            <person name="Thibaud-Nissen F."/>
            <person name="Schobel S."/>
            <person name="Town C.D."/>
        </authorList>
    </citation>
    <scope>GENOME REANNOTATION</scope>
    <source>
        <strain>cv. Columbia</strain>
    </source>
</reference>
<reference key="3">
    <citation type="journal article" date="2003" name="Science">
        <title>Empirical analysis of transcriptional activity in the Arabidopsis genome.</title>
        <authorList>
            <person name="Yamada K."/>
            <person name="Lim J."/>
            <person name="Dale J.M."/>
            <person name="Chen H."/>
            <person name="Shinn P."/>
            <person name="Palm C.J."/>
            <person name="Southwick A.M."/>
            <person name="Wu H.C."/>
            <person name="Kim C.J."/>
            <person name="Nguyen M."/>
            <person name="Pham P.K."/>
            <person name="Cheuk R.F."/>
            <person name="Karlin-Newmann G."/>
            <person name="Liu S.X."/>
            <person name="Lam B."/>
            <person name="Sakano H."/>
            <person name="Wu T."/>
            <person name="Yu G."/>
            <person name="Miranda M."/>
            <person name="Quach H.L."/>
            <person name="Tripp M."/>
            <person name="Chang C.H."/>
            <person name="Lee J.M."/>
            <person name="Toriumi M.J."/>
            <person name="Chan M.M."/>
            <person name="Tang C.C."/>
            <person name="Onodera C.S."/>
            <person name="Deng J.M."/>
            <person name="Akiyama K."/>
            <person name="Ansari Y."/>
            <person name="Arakawa T."/>
            <person name="Banh J."/>
            <person name="Banno F."/>
            <person name="Bowser L."/>
            <person name="Brooks S.Y."/>
            <person name="Carninci P."/>
            <person name="Chao Q."/>
            <person name="Choy N."/>
            <person name="Enju A."/>
            <person name="Goldsmith A.D."/>
            <person name="Gurjal M."/>
            <person name="Hansen N.F."/>
            <person name="Hayashizaki Y."/>
            <person name="Johnson-Hopson C."/>
            <person name="Hsuan V.W."/>
            <person name="Iida K."/>
            <person name="Karnes M."/>
            <person name="Khan S."/>
            <person name="Koesema E."/>
            <person name="Ishida J."/>
            <person name="Jiang P.X."/>
            <person name="Jones T."/>
            <person name="Kawai J."/>
            <person name="Kamiya A."/>
            <person name="Meyers C."/>
            <person name="Nakajima M."/>
            <person name="Narusaka M."/>
            <person name="Seki M."/>
            <person name="Sakurai T."/>
            <person name="Satou M."/>
            <person name="Tamse R."/>
            <person name="Vaysberg M."/>
            <person name="Wallender E.K."/>
            <person name="Wong C."/>
            <person name="Yamamura Y."/>
            <person name="Yuan S."/>
            <person name="Shinozaki K."/>
            <person name="Davis R.W."/>
            <person name="Theologis A."/>
            <person name="Ecker J.R."/>
        </authorList>
    </citation>
    <scope>NUCLEOTIDE SEQUENCE [LARGE SCALE MRNA]</scope>
    <source>
        <strain>cv. Columbia</strain>
    </source>
</reference>
<reference key="4">
    <citation type="journal article" date="2002" name="Plant Physiol.">
        <title>Identification of Arabidopsis ethylene-responsive element binding factors with distinct induction kinetics after pathogen infection.</title>
        <authorList>
            <person name="Onate-Sanchez L."/>
            <person name="Singh K.B."/>
        </authorList>
    </citation>
    <scope>FUNCTION</scope>
    <scope>INDUCTION</scope>
</reference>
<reference key="5">
    <citation type="journal article" date="2006" name="Plant Physiol.">
        <title>Genome-wide analysis of the ERF gene family in Arabidopsis and rice.</title>
        <authorList>
            <person name="Nakano T."/>
            <person name="Suzuki K."/>
            <person name="Fujimura T."/>
            <person name="Shinshi H."/>
        </authorList>
    </citation>
    <scope>GENE FAMILY</scope>
    <scope>NOMENCLATURE</scope>
</reference>
<accession>Q8VYM0</accession>
<accession>Q9SJX3</accession>
<keyword id="KW-0010">Activator</keyword>
<keyword id="KW-0238">DNA-binding</keyword>
<keyword id="KW-0936">Ethylene signaling pathway</keyword>
<keyword id="KW-0539">Nucleus</keyword>
<keyword id="KW-0611">Plant defense</keyword>
<keyword id="KW-1185">Reference proteome</keyword>
<keyword id="KW-0804">Transcription</keyword>
<keyword id="KW-0805">Transcription regulation</keyword>